<comment type="function">
    <text evidence="1">Part of the ABC transporter complex CysAWTP involved in sulfate/thiosulfate import. Responsible for energy coupling to the transport system.</text>
</comment>
<comment type="catalytic activity">
    <reaction evidence="1">
        <text>sulfate(out) + ATP + H2O = sulfate(in) + ADP + phosphate + H(+)</text>
        <dbReference type="Rhea" id="RHEA:10192"/>
        <dbReference type="ChEBI" id="CHEBI:15377"/>
        <dbReference type="ChEBI" id="CHEBI:15378"/>
        <dbReference type="ChEBI" id="CHEBI:16189"/>
        <dbReference type="ChEBI" id="CHEBI:30616"/>
        <dbReference type="ChEBI" id="CHEBI:43474"/>
        <dbReference type="ChEBI" id="CHEBI:456216"/>
        <dbReference type="EC" id="7.3.2.3"/>
    </reaction>
</comment>
<comment type="catalytic activity">
    <reaction evidence="1">
        <text>thiosulfate(out) + ATP + H2O = thiosulfate(in) + ADP + phosphate + H(+)</text>
        <dbReference type="Rhea" id="RHEA:29871"/>
        <dbReference type="ChEBI" id="CHEBI:15377"/>
        <dbReference type="ChEBI" id="CHEBI:15378"/>
        <dbReference type="ChEBI" id="CHEBI:30616"/>
        <dbReference type="ChEBI" id="CHEBI:33542"/>
        <dbReference type="ChEBI" id="CHEBI:43474"/>
        <dbReference type="ChEBI" id="CHEBI:456216"/>
        <dbReference type="EC" id="7.3.2.3"/>
    </reaction>
</comment>
<comment type="subunit">
    <text evidence="1">The complex is composed of two ATP-binding proteins (CysA), two transmembrane proteins (CysT and CysW) and a solute-binding protein (CysP).</text>
</comment>
<comment type="subcellular location">
    <subcellularLocation>
        <location evidence="1">Cell inner membrane</location>
        <topology evidence="1">Peripheral membrane protein</topology>
    </subcellularLocation>
</comment>
<comment type="similarity">
    <text evidence="1">Belongs to the ABC transporter superfamily. Sulfate/tungstate importer (TC 3.A.1.6) family.</text>
</comment>
<feature type="chain" id="PRO_0000092301" description="Sulfate/thiosulfate import ATP-binding protein CysA">
    <location>
        <begin position="1"/>
        <end position="343"/>
    </location>
</feature>
<feature type="domain" description="ABC transporter" evidence="1">
    <location>
        <begin position="3"/>
        <end position="237"/>
    </location>
</feature>
<feature type="binding site" evidence="1">
    <location>
        <begin position="35"/>
        <end position="42"/>
    </location>
    <ligand>
        <name>ATP</name>
        <dbReference type="ChEBI" id="CHEBI:30616"/>
    </ligand>
</feature>
<accession>Q8PC11</accession>
<organism>
    <name type="scientific">Xanthomonas campestris pv. campestris (strain ATCC 33913 / DSM 3586 / NCPPB 528 / LMG 568 / P 25)</name>
    <dbReference type="NCBI Taxonomy" id="190485"/>
    <lineage>
        <taxon>Bacteria</taxon>
        <taxon>Pseudomonadati</taxon>
        <taxon>Pseudomonadota</taxon>
        <taxon>Gammaproteobacteria</taxon>
        <taxon>Lysobacterales</taxon>
        <taxon>Lysobacteraceae</taxon>
        <taxon>Xanthomonas</taxon>
    </lineage>
</organism>
<name>CYSA_XANCP</name>
<gene>
    <name evidence="1" type="primary">cysA</name>
    <name type="ordered locus">XCC0943</name>
</gene>
<protein>
    <recommendedName>
        <fullName evidence="1">Sulfate/thiosulfate import ATP-binding protein CysA</fullName>
        <ecNumber evidence="1">7.3.2.3</ecNumber>
    </recommendedName>
    <alternativeName>
        <fullName evidence="1">Sulfate-transporting ATPase</fullName>
    </alternativeName>
</protein>
<evidence type="ECO:0000255" key="1">
    <source>
        <dbReference type="HAMAP-Rule" id="MF_01701"/>
    </source>
</evidence>
<keyword id="KW-0067">ATP-binding</keyword>
<keyword id="KW-0997">Cell inner membrane</keyword>
<keyword id="KW-1003">Cell membrane</keyword>
<keyword id="KW-0472">Membrane</keyword>
<keyword id="KW-0547">Nucleotide-binding</keyword>
<keyword id="KW-1185">Reference proteome</keyword>
<keyword id="KW-0764">Sulfate transport</keyword>
<keyword id="KW-1278">Translocase</keyword>
<keyword id="KW-0813">Transport</keyword>
<reference key="1">
    <citation type="journal article" date="2002" name="Nature">
        <title>Comparison of the genomes of two Xanthomonas pathogens with differing host specificities.</title>
        <authorList>
            <person name="da Silva A.C.R."/>
            <person name="Ferro J.A."/>
            <person name="Reinach F.C."/>
            <person name="Farah C.S."/>
            <person name="Furlan L.R."/>
            <person name="Quaggio R.B."/>
            <person name="Monteiro-Vitorello C.B."/>
            <person name="Van Sluys M.A."/>
            <person name="Almeida N.F. Jr."/>
            <person name="Alves L.M.C."/>
            <person name="do Amaral A.M."/>
            <person name="Bertolini M.C."/>
            <person name="Camargo L.E.A."/>
            <person name="Camarotte G."/>
            <person name="Cannavan F."/>
            <person name="Cardozo J."/>
            <person name="Chambergo F."/>
            <person name="Ciapina L.P."/>
            <person name="Cicarelli R.M.B."/>
            <person name="Coutinho L.L."/>
            <person name="Cursino-Santos J.R."/>
            <person name="El-Dorry H."/>
            <person name="Faria J.B."/>
            <person name="Ferreira A.J.S."/>
            <person name="Ferreira R.C.C."/>
            <person name="Ferro M.I.T."/>
            <person name="Formighieri E.F."/>
            <person name="Franco M.C."/>
            <person name="Greggio C.C."/>
            <person name="Gruber A."/>
            <person name="Katsuyama A.M."/>
            <person name="Kishi L.T."/>
            <person name="Leite R.P."/>
            <person name="Lemos E.G.M."/>
            <person name="Lemos M.V.F."/>
            <person name="Locali E.C."/>
            <person name="Machado M.A."/>
            <person name="Madeira A.M.B.N."/>
            <person name="Martinez-Rossi N.M."/>
            <person name="Martins E.C."/>
            <person name="Meidanis J."/>
            <person name="Menck C.F.M."/>
            <person name="Miyaki C.Y."/>
            <person name="Moon D.H."/>
            <person name="Moreira L.M."/>
            <person name="Novo M.T.M."/>
            <person name="Okura V.K."/>
            <person name="Oliveira M.C."/>
            <person name="Oliveira V.R."/>
            <person name="Pereira H.A."/>
            <person name="Rossi A."/>
            <person name="Sena J.A.D."/>
            <person name="Silva C."/>
            <person name="de Souza R.F."/>
            <person name="Spinola L.A.F."/>
            <person name="Takita M.A."/>
            <person name="Tamura R.E."/>
            <person name="Teixeira E.C."/>
            <person name="Tezza R.I.D."/>
            <person name="Trindade dos Santos M."/>
            <person name="Truffi D."/>
            <person name="Tsai S.M."/>
            <person name="White F.F."/>
            <person name="Setubal J.C."/>
            <person name="Kitajima J.P."/>
        </authorList>
    </citation>
    <scope>NUCLEOTIDE SEQUENCE [LARGE SCALE GENOMIC DNA]</scope>
    <source>
        <strain>ATCC 33913 / DSM 3586 / NCPPB 528 / LMG 568 / P 25</strain>
    </source>
</reference>
<dbReference type="EC" id="7.3.2.3" evidence="1"/>
<dbReference type="EMBL" id="AE008922">
    <property type="protein sequence ID" value="AAM40253.1"/>
    <property type="molecule type" value="Genomic_DNA"/>
</dbReference>
<dbReference type="RefSeq" id="NP_636329.1">
    <property type="nucleotide sequence ID" value="NC_003902.1"/>
</dbReference>
<dbReference type="RefSeq" id="WP_011036157.1">
    <property type="nucleotide sequence ID" value="NC_003902.1"/>
</dbReference>
<dbReference type="SMR" id="Q8PC11"/>
<dbReference type="STRING" id="190485.XCC0943"/>
<dbReference type="EnsemblBacteria" id="AAM40253">
    <property type="protein sequence ID" value="AAM40253"/>
    <property type="gene ID" value="XCC0943"/>
</dbReference>
<dbReference type="KEGG" id="xcc:XCC0943"/>
<dbReference type="PATRIC" id="fig|190485.4.peg.1016"/>
<dbReference type="eggNOG" id="COG1118">
    <property type="taxonomic scope" value="Bacteria"/>
</dbReference>
<dbReference type="HOGENOM" id="CLU_000604_1_1_6"/>
<dbReference type="OrthoDB" id="9802264at2"/>
<dbReference type="Proteomes" id="UP000001010">
    <property type="component" value="Chromosome"/>
</dbReference>
<dbReference type="GO" id="GO:0043190">
    <property type="term" value="C:ATP-binding cassette (ABC) transporter complex"/>
    <property type="evidence" value="ECO:0007669"/>
    <property type="project" value="InterPro"/>
</dbReference>
<dbReference type="GO" id="GO:0015419">
    <property type="term" value="F:ABC-type sulfate transporter activity"/>
    <property type="evidence" value="ECO:0007669"/>
    <property type="project" value="InterPro"/>
</dbReference>
<dbReference type="GO" id="GO:0102025">
    <property type="term" value="F:ABC-type thiosulfate transporter activity"/>
    <property type="evidence" value="ECO:0007669"/>
    <property type="project" value="RHEA"/>
</dbReference>
<dbReference type="GO" id="GO:0005524">
    <property type="term" value="F:ATP binding"/>
    <property type="evidence" value="ECO:0007669"/>
    <property type="project" value="UniProtKB-KW"/>
</dbReference>
<dbReference type="GO" id="GO:0016887">
    <property type="term" value="F:ATP hydrolysis activity"/>
    <property type="evidence" value="ECO:0007669"/>
    <property type="project" value="InterPro"/>
</dbReference>
<dbReference type="GO" id="GO:1902358">
    <property type="term" value="P:sulfate transmembrane transport"/>
    <property type="evidence" value="ECO:0000318"/>
    <property type="project" value="GO_Central"/>
</dbReference>
<dbReference type="CDD" id="cd03296">
    <property type="entry name" value="ABC_CysA_sulfate_importer"/>
    <property type="match status" value="1"/>
</dbReference>
<dbReference type="FunFam" id="3.40.50.300:FF:001655">
    <property type="entry name" value="Sulfate/thiosulfate import ATP-binding protein CysA"/>
    <property type="match status" value="1"/>
</dbReference>
<dbReference type="Gene3D" id="3.40.50.300">
    <property type="entry name" value="P-loop containing nucleotide triphosphate hydrolases"/>
    <property type="match status" value="1"/>
</dbReference>
<dbReference type="InterPro" id="IPR003593">
    <property type="entry name" value="AAA+_ATPase"/>
</dbReference>
<dbReference type="InterPro" id="IPR050093">
    <property type="entry name" value="ABC_SmlMolc_Importer"/>
</dbReference>
<dbReference type="InterPro" id="IPR003439">
    <property type="entry name" value="ABC_transporter-like_ATP-bd"/>
</dbReference>
<dbReference type="InterPro" id="IPR017871">
    <property type="entry name" value="ABC_transporter-like_CS"/>
</dbReference>
<dbReference type="InterPro" id="IPR008995">
    <property type="entry name" value="Mo/tungstate-bd_C_term_dom"/>
</dbReference>
<dbReference type="InterPro" id="IPR027417">
    <property type="entry name" value="P-loop_NTPase"/>
</dbReference>
<dbReference type="InterPro" id="IPR005666">
    <property type="entry name" value="Sulph_transpt1"/>
</dbReference>
<dbReference type="InterPro" id="IPR024765">
    <property type="entry name" value="TOBE-like"/>
</dbReference>
<dbReference type="NCBIfam" id="TIGR00968">
    <property type="entry name" value="3a0106s01"/>
    <property type="match status" value="1"/>
</dbReference>
<dbReference type="PANTHER" id="PTHR42781">
    <property type="entry name" value="SPERMIDINE/PUTRESCINE IMPORT ATP-BINDING PROTEIN POTA"/>
    <property type="match status" value="1"/>
</dbReference>
<dbReference type="PANTHER" id="PTHR42781:SF4">
    <property type="entry name" value="SPERMIDINE_PUTRESCINE IMPORT ATP-BINDING PROTEIN POTA"/>
    <property type="match status" value="1"/>
</dbReference>
<dbReference type="Pfam" id="PF00005">
    <property type="entry name" value="ABC_tran"/>
    <property type="match status" value="1"/>
</dbReference>
<dbReference type="Pfam" id="PF12857">
    <property type="entry name" value="TOBE_3"/>
    <property type="match status" value="1"/>
</dbReference>
<dbReference type="SMART" id="SM00382">
    <property type="entry name" value="AAA"/>
    <property type="match status" value="1"/>
</dbReference>
<dbReference type="SUPFAM" id="SSF50331">
    <property type="entry name" value="MOP-like"/>
    <property type="match status" value="1"/>
</dbReference>
<dbReference type="SUPFAM" id="SSF52540">
    <property type="entry name" value="P-loop containing nucleoside triphosphate hydrolases"/>
    <property type="match status" value="1"/>
</dbReference>
<dbReference type="PROSITE" id="PS00211">
    <property type="entry name" value="ABC_TRANSPORTER_1"/>
    <property type="match status" value="1"/>
</dbReference>
<dbReference type="PROSITE" id="PS50893">
    <property type="entry name" value="ABC_TRANSPORTER_2"/>
    <property type="match status" value="1"/>
</dbReference>
<dbReference type="PROSITE" id="PS51237">
    <property type="entry name" value="CYSA"/>
    <property type="match status" value="1"/>
</dbReference>
<sequence length="343" mass="37761">MGIRISHLRKQFASFTALDDITLDVRQGELLALLGPSGSGKTTLLRIMAGLEHADGGQVLFGDEDATRMSVQSRRVGFVFQHYALFKHMDVFENIAFGLRVRRGKERWAEARIRARVEELLALVQLQGLEQRYPTQLSGGQRQRVALARALAIEPRVLLLDEPFGALDAQVRRDLRRWLRELHEQTGLTTVFVTHDQEEALELADRVAILNRGRIEQLDTPARVYDTPASPFVYSFVGAVNRIPGVLAHGQIQVAGHALPSANPALAAGPVEVYVRPEDLVPDADGWPATVAWAQRSGARLRVRAILDAAGNEVEVELPASAGTITAGQQLRLAARHYGVFPA</sequence>
<proteinExistence type="inferred from homology"/>